<gene>
    <name evidence="1" type="primary">greA</name>
    <name type="ordered locus">RBAM_024420</name>
</gene>
<dbReference type="EMBL" id="CP000560">
    <property type="protein sequence ID" value="ABS74802.1"/>
    <property type="molecule type" value="Genomic_DNA"/>
</dbReference>
<dbReference type="RefSeq" id="WP_003152766.1">
    <property type="nucleotide sequence ID" value="NC_009725.2"/>
</dbReference>
<dbReference type="SMR" id="A7Z726"/>
<dbReference type="GeneID" id="93081582"/>
<dbReference type="KEGG" id="bay:RBAM_024420"/>
<dbReference type="HOGENOM" id="CLU_101379_2_1_9"/>
<dbReference type="Proteomes" id="UP000001120">
    <property type="component" value="Chromosome"/>
</dbReference>
<dbReference type="GO" id="GO:0003677">
    <property type="term" value="F:DNA binding"/>
    <property type="evidence" value="ECO:0007669"/>
    <property type="project" value="UniProtKB-UniRule"/>
</dbReference>
<dbReference type="GO" id="GO:0070063">
    <property type="term" value="F:RNA polymerase binding"/>
    <property type="evidence" value="ECO:0007669"/>
    <property type="project" value="InterPro"/>
</dbReference>
<dbReference type="GO" id="GO:0006354">
    <property type="term" value="P:DNA-templated transcription elongation"/>
    <property type="evidence" value="ECO:0007669"/>
    <property type="project" value="TreeGrafter"/>
</dbReference>
<dbReference type="GO" id="GO:0032784">
    <property type="term" value="P:regulation of DNA-templated transcription elongation"/>
    <property type="evidence" value="ECO:0007669"/>
    <property type="project" value="UniProtKB-UniRule"/>
</dbReference>
<dbReference type="FunFam" id="1.10.287.180:FF:000001">
    <property type="entry name" value="Transcription elongation factor GreA"/>
    <property type="match status" value="1"/>
</dbReference>
<dbReference type="FunFam" id="3.10.50.30:FF:000001">
    <property type="entry name" value="Transcription elongation factor GreA"/>
    <property type="match status" value="1"/>
</dbReference>
<dbReference type="Gene3D" id="3.10.50.30">
    <property type="entry name" value="Transcription elongation factor, GreA/GreB, C-terminal domain"/>
    <property type="match status" value="1"/>
</dbReference>
<dbReference type="Gene3D" id="1.10.287.180">
    <property type="entry name" value="Transcription elongation factor, GreA/GreB, N-terminal domain"/>
    <property type="match status" value="1"/>
</dbReference>
<dbReference type="HAMAP" id="MF_00105">
    <property type="entry name" value="GreA_GreB"/>
    <property type="match status" value="1"/>
</dbReference>
<dbReference type="InterPro" id="IPR036953">
    <property type="entry name" value="GreA/GreB_C_sf"/>
</dbReference>
<dbReference type="InterPro" id="IPR018151">
    <property type="entry name" value="TF_GreA/GreB_CS"/>
</dbReference>
<dbReference type="InterPro" id="IPR006359">
    <property type="entry name" value="Tscrpt_elong_fac_GreA"/>
</dbReference>
<dbReference type="InterPro" id="IPR028624">
    <property type="entry name" value="Tscrpt_elong_fac_GreA/B"/>
</dbReference>
<dbReference type="InterPro" id="IPR001437">
    <property type="entry name" value="Tscrpt_elong_fac_GreA/B_C"/>
</dbReference>
<dbReference type="InterPro" id="IPR023459">
    <property type="entry name" value="Tscrpt_elong_fac_GreA/B_fam"/>
</dbReference>
<dbReference type="InterPro" id="IPR022691">
    <property type="entry name" value="Tscrpt_elong_fac_GreA/B_N"/>
</dbReference>
<dbReference type="InterPro" id="IPR036805">
    <property type="entry name" value="Tscrpt_elong_fac_GreA/B_N_sf"/>
</dbReference>
<dbReference type="NCBIfam" id="TIGR01462">
    <property type="entry name" value="greA"/>
    <property type="match status" value="1"/>
</dbReference>
<dbReference type="NCBIfam" id="NF001261">
    <property type="entry name" value="PRK00226.1-2"/>
    <property type="match status" value="1"/>
</dbReference>
<dbReference type="NCBIfam" id="NF001263">
    <property type="entry name" value="PRK00226.1-4"/>
    <property type="match status" value="1"/>
</dbReference>
<dbReference type="PANTHER" id="PTHR30437">
    <property type="entry name" value="TRANSCRIPTION ELONGATION FACTOR GREA"/>
    <property type="match status" value="1"/>
</dbReference>
<dbReference type="PANTHER" id="PTHR30437:SF4">
    <property type="entry name" value="TRANSCRIPTION ELONGATION FACTOR GREA"/>
    <property type="match status" value="1"/>
</dbReference>
<dbReference type="Pfam" id="PF01272">
    <property type="entry name" value="GreA_GreB"/>
    <property type="match status" value="1"/>
</dbReference>
<dbReference type="Pfam" id="PF03449">
    <property type="entry name" value="GreA_GreB_N"/>
    <property type="match status" value="1"/>
</dbReference>
<dbReference type="PIRSF" id="PIRSF006092">
    <property type="entry name" value="GreA_GreB"/>
    <property type="match status" value="1"/>
</dbReference>
<dbReference type="SUPFAM" id="SSF54534">
    <property type="entry name" value="FKBP-like"/>
    <property type="match status" value="1"/>
</dbReference>
<dbReference type="SUPFAM" id="SSF46557">
    <property type="entry name" value="GreA transcript cleavage protein, N-terminal domain"/>
    <property type="match status" value="1"/>
</dbReference>
<dbReference type="PROSITE" id="PS00829">
    <property type="entry name" value="GREAB_1"/>
    <property type="match status" value="1"/>
</dbReference>
<dbReference type="PROSITE" id="PS00830">
    <property type="entry name" value="GREAB_2"/>
    <property type="match status" value="1"/>
</dbReference>
<name>GREA_BACVZ</name>
<organism>
    <name type="scientific">Bacillus velezensis (strain DSM 23117 / BGSC 10A6 / LMG 26770 / FZB42)</name>
    <name type="common">Bacillus amyloliquefaciens subsp. plantarum</name>
    <dbReference type="NCBI Taxonomy" id="326423"/>
    <lineage>
        <taxon>Bacteria</taxon>
        <taxon>Bacillati</taxon>
        <taxon>Bacillota</taxon>
        <taxon>Bacilli</taxon>
        <taxon>Bacillales</taxon>
        <taxon>Bacillaceae</taxon>
        <taxon>Bacillus</taxon>
        <taxon>Bacillus amyloliquefaciens group</taxon>
    </lineage>
</organism>
<sequence>MAQEKVFPMTHEGKQKLEQELEQLKTVKRKEVVERIKIARSFGDLSENSEYDSAKEEQAFVEGRITTLENMIRNAKIIEDDGGSNVVGLGKTVSFIELPDGEEESYTIVGSAEADPFEGKISNDSPIAKSLLGRKVDEEVTVQTPGGEMLVKIVKIS</sequence>
<keyword id="KW-0175">Coiled coil</keyword>
<keyword id="KW-0238">DNA-binding</keyword>
<keyword id="KW-0804">Transcription</keyword>
<keyword id="KW-0805">Transcription regulation</keyword>
<proteinExistence type="inferred from homology"/>
<accession>A7Z726</accession>
<evidence type="ECO:0000255" key="1">
    <source>
        <dbReference type="HAMAP-Rule" id="MF_00105"/>
    </source>
</evidence>
<reference key="1">
    <citation type="journal article" date="2007" name="Nat. Biotechnol.">
        <title>Comparative analysis of the complete genome sequence of the plant growth-promoting bacterium Bacillus amyloliquefaciens FZB42.</title>
        <authorList>
            <person name="Chen X.H."/>
            <person name="Koumoutsi A."/>
            <person name="Scholz R."/>
            <person name="Eisenreich A."/>
            <person name="Schneider K."/>
            <person name="Heinemeyer I."/>
            <person name="Morgenstern B."/>
            <person name="Voss B."/>
            <person name="Hess W.R."/>
            <person name="Reva O."/>
            <person name="Junge H."/>
            <person name="Voigt B."/>
            <person name="Jungblut P.R."/>
            <person name="Vater J."/>
            <person name="Suessmuth R."/>
            <person name="Liesegang H."/>
            <person name="Strittmatter A."/>
            <person name="Gottschalk G."/>
            <person name="Borriss R."/>
        </authorList>
    </citation>
    <scope>NUCLEOTIDE SEQUENCE [LARGE SCALE GENOMIC DNA]</scope>
    <source>
        <strain>DSM 23117 / BGSC 10A6 / LMG 26770 / FZB42</strain>
    </source>
</reference>
<comment type="function">
    <text evidence="1">Necessary for efficient RNA polymerase transcription elongation past template-encoded arresting sites. The arresting sites in DNA have the property of trapping a certain fraction of elongating RNA polymerases that pass through, resulting in locked ternary complexes. Cleavage of the nascent transcript by cleavage factors such as GreA or GreB allows the resumption of elongation from the new 3'terminus. GreA releases sequences of 2 to 3 nucleotides.</text>
</comment>
<comment type="similarity">
    <text evidence="1">Belongs to the GreA/GreB family.</text>
</comment>
<protein>
    <recommendedName>
        <fullName evidence="1">Transcription elongation factor GreA</fullName>
    </recommendedName>
    <alternativeName>
        <fullName evidence="1">Transcript cleavage factor GreA</fullName>
    </alternativeName>
</protein>
<feature type="chain" id="PRO_1000034245" description="Transcription elongation factor GreA">
    <location>
        <begin position="1"/>
        <end position="157"/>
    </location>
</feature>
<feature type="coiled-coil region" evidence="1">
    <location>
        <begin position="10"/>
        <end position="76"/>
    </location>
</feature>